<reference key="1">
    <citation type="submission" date="2007-03" db="EMBL/GenBank/DDBJ databases">
        <authorList>
            <consortium name="NIH - Xenopus Gene Collection (XGC) project"/>
        </authorList>
    </citation>
    <scope>NUCLEOTIDE SEQUENCE [LARGE SCALE MRNA]</scope>
    <source>
        <tissue>Embryo</tissue>
    </source>
</reference>
<protein>
    <recommendedName>
        <fullName>Helicase ARIP4</fullName>
        <ecNumber>3.6.4.12</ecNumber>
    </recommendedName>
    <alternativeName>
        <fullName>Androgen receptor-interacting protein 4</fullName>
    </alternativeName>
    <alternativeName>
        <fullName>RAD54-like protein 2</fullName>
    </alternativeName>
</protein>
<organism>
    <name type="scientific">Xenopus tropicalis</name>
    <name type="common">Western clawed frog</name>
    <name type="synonym">Silurana tropicalis</name>
    <dbReference type="NCBI Taxonomy" id="8364"/>
    <lineage>
        <taxon>Eukaryota</taxon>
        <taxon>Metazoa</taxon>
        <taxon>Chordata</taxon>
        <taxon>Craniata</taxon>
        <taxon>Vertebrata</taxon>
        <taxon>Euteleostomi</taxon>
        <taxon>Amphibia</taxon>
        <taxon>Batrachia</taxon>
        <taxon>Anura</taxon>
        <taxon>Pipoidea</taxon>
        <taxon>Pipidae</taxon>
        <taxon>Xenopodinae</taxon>
        <taxon>Xenopus</taxon>
        <taxon>Silurana</taxon>
    </lineage>
</organism>
<comment type="function">
    <text evidence="1">DNA helicase that modulates androgen receptor (AR)-dependent transactivation in a promoter-dependent manner.</text>
</comment>
<comment type="catalytic activity">
    <reaction>
        <text>ATP + H2O = ADP + phosphate + H(+)</text>
        <dbReference type="Rhea" id="RHEA:13065"/>
        <dbReference type="ChEBI" id="CHEBI:15377"/>
        <dbReference type="ChEBI" id="CHEBI:15378"/>
        <dbReference type="ChEBI" id="CHEBI:30616"/>
        <dbReference type="ChEBI" id="CHEBI:43474"/>
        <dbReference type="ChEBI" id="CHEBI:456216"/>
        <dbReference type="EC" id="3.6.4.12"/>
    </reaction>
</comment>
<comment type="subcellular location">
    <subcellularLocation>
        <location evidence="1">Nucleus</location>
    </subcellularLocation>
</comment>
<comment type="domain">
    <text evidence="1">Leu-Xaa-Xaa-Leu-Leu (LXXLL) motifs are known to be important for the association with nuclear receptors.</text>
</comment>
<comment type="similarity">
    <text evidence="5">Belongs to the SNF2/RAD54 helicase family.</text>
</comment>
<gene>
    <name type="primary">rad54l2</name>
    <name type="synonym">arip4</name>
</gene>
<dbReference type="EC" id="3.6.4.12"/>
<dbReference type="EMBL" id="BC135473">
    <property type="protein sequence ID" value="AAI35474.1"/>
    <property type="molecule type" value="mRNA"/>
</dbReference>
<dbReference type="RefSeq" id="NP_001076824.1">
    <property type="nucleotide sequence ID" value="NM_001083355.1"/>
</dbReference>
<dbReference type="RefSeq" id="XP_012816701.2">
    <property type="nucleotide sequence ID" value="XM_012961247.3"/>
</dbReference>
<dbReference type="RefSeq" id="XP_012816702.2">
    <property type="nucleotide sequence ID" value="XM_012961248.3"/>
</dbReference>
<dbReference type="RefSeq" id="XP_012816703.2">
    <property type="nucleotide sequence ID" value="XM_012961249.3"/>
</dbReference>
<dbReference type="SMR" id="A4IHD2"/>
<dbReference type="FunCoup" id="A4IHD2">
    <property type="interactions" value="1227"/>
</dbReference>
<dbReference type="STRING" id="8364.ENSXETP00000009619"/>
<dbReference type="PaxDb" id="8364-ENSXETP00000000131"/>
<dbReference type="GeneID" id="733747"/>
<dbReference type="KEGG" id="xtr:733747"/>
<dbReference type="AGR" id="Xenbase:XB-GENE-5829376"/>
<dbReference type="CTD" id="23132"/>
<dbReference type="Xenbase" id="XB-GENE-5829376">
    <property type="gene designation" value="rad54l2"/>
</dbReference>
<dbReference type="eggNOG" id="KOG1016">
    <property type="taxonomic scope" value="Eukaryota"/>
</dbReference>
<dbReference type="InParanoid" id="A4IHD2"/>
<dbReference type="OMA" id="FLFNPSM"/>
<dbReference type="OrthoDB" id="9900844at2759"/>
<dbReference type="Proteomes" id="UP000008143">
    <property type="component" value="Chromosome 4"/>
</dbReference>
<dbReference type="Bgee" id="ENSXETG00000000070">
    <property type="expression patterns" value="Expressed in 4-cell stage embryo and 13 other cell types or tissues"/>
</dbReference>
<dbReference type="GO" id="GO:0005634">
    <property type="term" value="C:nucleus"/>
    <property type="evidence" value="ECO:0007669"/>
    <property type="project" value="UniProtKB-SubCell"/>
</dbReference>
<dbReference type="GO" id="GO:0005524">
    <property type="term" value="F:ATP binding"/>
    <property type="evidence" value="ECO:0007669"/>
    <property type="project" value="UniProtKB-KW"/>
</dbReference>
<dbReference type="GO" id="GO:0016887">
    <property type="term" value="F:ATP hydrolysis activity"/>
    <property type="evidence" value="ECO:0007669"/>
    <property type="project" value="InterPro"/>
</dbReference>
<dbReference type="GO" id="GO:0003677">
    <property type="term" value="F:DNA binding"/>
    <property type="evidence" value="ECO:0007669"/>
    <property type="project" value="UniProtKB-KW"/>
</dbReference>
<dbReference type="GO" id="GO:0004386">
    <property type="term" value="F:helicase activity"/>
    <property type="evidence" value="ECO:0007669"/>
    <property type="project" value="UniProtKB-KW"/>
</dbReference>
<dbReference type="CDD" id="cd18069">
    <property type="entry name" value="DEXHc_ARIP4"/>
    <property type="match status" value="1"/>
</dbReference>
<dbReference type="CDD" id="cd18793">
    <property type="entry name" value="SF2_C_SNF"/>
    <property type="match status" value="1"/>
</dbReference>
<dbReference type="Gene3D" id="3.40.50.300">
    <property type="entry name" value="P-loop containing nucleotide triphosphate hydrolases"/>
    <property type="match status" value="2"/>
</dbReference>
<dbReference type="Gene3D" id="1.20.120.850">
    <property type="entry name" value="SWI2/SNF2 ATPases, N-terminal domain"/>
    <property type="match status" value="1"/>
</dbReference>
<dbReference type="Gene3D" id="3.40.50.10810">
    <property type="entry name" value="Tandem AAA-ATPase domain"/>
    <property type="match status" value="1"/>
</dbReference>
<dbReference type="InterPro" id="IPR044574">
    <property type="entry name" value="ARIP4-like"/>
</dbReference>
<dbReference type="InterPro" id="IPR044573">
    <property type="entry name" value="ARIP4_DEXHc"/>
</dbReference>
<dbReference type="InterPro" id="IPR014001">
    <property type="entry name" value="Helicase_ATP-bd"/>
</dbReference>
<dbReference type="InterPro" id="IPR001650">
    <property type="entry name" value="Helicase_C-like"/>
</dbReference>
<dbReference type="InterPro" id="IPR027417">
    <property type="entry name" value="P-loop_NTPase"/>
</dbReference>
<dbReference type="InterPro" id="IPR038718">
    <property type="entry name" value="SNF2-like_sf"/>
</dbReference>
<dbReference type="InterPro" id="IPR049730">
    <property type="entry name" value="SNF2/RAD54-like_C"/>
</dbReference>
<dbReference type="InterPro" id="IPR000330">
    <property type="entry name" value="SNF2_N"/>
</dbReference>
<dbReference type="PANTHER" id="PTHR45797:SF1">
    <property type="entry name" value="HELICASE ARIP4"/>
    <property type="match status" value="1"/>
</dbReference>
<dbReference type="PANTHER" id="PTHR45797">
    <property type="entry name" value="RAD54-LIKE"/>
    <property type="match status" value="1"/>
</dbReference>
<dbReference type="Pfam" id="PF00271">
    <property type="entry name" value="Helicase_C"/>
    <property type="match status" value="1"/>
</dbReference>
<dbReference type="Pfam" id="PF00176">
    <property type="entry name" value="SNF2-rel_dom"/>
    <property type="match status" value="1"/>
</dbReference>
<dbReference type="SMART" id="SM00487">
    <property type="entry name" value="DEXDc"/>
    <property type="match status" value="1"/>
</dbReference>
<dbReference type="SMART" id="SM00490">
    <property type="entry name" value="HELICc"/>
    <property type="match status" value="1"/>
</dbReference>
<dbReference type="SUPFAM" id="SSF52540">
    <property type="entry name" value="P-loop containing nucleoside triphosphate hydrolases"/>
    <property type="match status" value="2"/>
</dbReference>
<dbReference type="PROSITE" id="PS51192">
    <property type="entry name" value="HELICASE_ATP_BIND_1"/>
    <property type="match status" value="1"/>
</dbReference>
<dbReference type="PROSITE" id="PS51194">
    <property type="entry name" value="HELICASE_CTER"/>
    <property type="match status" value="1"/>
</dbReference>
<sequence length="1396" mass="156367">MSDASISGSEPELDPEDMEEEEEDDEDDDEEEEEEEDEEDNDGDDEDDKQDINEKSQNAALGEDSPEQGEEGWKRSTTSGQSGQESDEAKKKRLQKPANLRRNIRKLLREDQLESVTKTAQQEELERRKRLEQQRKDYPLPLTLPPVSLDFLQEEIELRAADVSQLVKSQEIICLDSSSGESDDEGKVKSHSIKDEIIELSSGEEDNLQISDNADSTNEVDGDITTENSGSHVNDALNQADHLGRVLVNINHPPNEKDIFLAPQLARAVKSHQIGGIRFLYDNLVESLERFSGSSGFGCILAHSMGLGKTLQVISFLDVLFQHTSAKTVLAIVPVNTLQNWLAEFNMWLPPPESLPKDHNQELVQPRAFKVHTMNDEHKTTAARAKVVNDWATDGGVLLMGYEMYRLLSLKKSFTAGRKKKSKKAAGPVIIDLDEEDRQQEMLKGIEKALSRPGPDVVICDEGHRIKNCHASTSQALKNIRSRRRVVLTGYPLQNNLIEYWCMVDFVRPDFLGTRQEFSNMFERPILNGQCVDSTPQDKRLMRYRSHVLHSLLEGFVQRRGHTVLKAQLPFKEEHVILVRLSKIQRDLYTEFMNRFRDAGNSGWLGLNPLKAFCVCCKIWNHPDVLYEALQKENLANEQDLDVEDLGTNNRCNAQSGKIKVEPNSLGALMGETAHTKQLQGIVLNPSHEKANQVVTYEWAKEILSDYIPGQLQNSPKMVLLFHLIEESMRMGDKILVFSQSLSTLSIMEEFLAKRKMPIPAGSDGQEGHTWIRNVNYYRLDGSTSASERERLINQFNDPSNEKVWLFLLSTRAGCLGVNLIGANRVVVFDASWNPCHDAQAVCRVYRYGQRKPCYIYRLVSDFTLEKKIYDRQITKQGMSDRVVDDLNPEVNFTRREVENLLHFVEEEPDASRQHLDSSSFHEAVLQKACLQYPHLITKEPFQHESLLLDRKEQKLTLAEKKAAKRGYEEEKRASVPYTRPSYTQYYPAPDHNLGNIPAFSQRHWRPLMKGDDRPVASVRPLQSTPIPMLPRHVSVNHPGSASASVHPYNFPVNYLQRAGVLVQKVVTTTDIVIPGMTTSTDVQARISAGESIHVIRGTKGTYIRTSDGRIFAIRASGKQKSGEVRRQATSGAQGSSAPYLSNGRHSTSSPSQQDSEDPPRPLSPDSPEILNELQKYADAAAARGSHTAPQLQNLGLHHQGINPAPKLQPRKRKDPQDQSSHWPSNKRNPYSQLSYPNTGGFGVTPSTMNHNLVRSSNPVFMGPGGGSSHFQLPSLLSDPQTGLPLVQDSLLTHSSGTSSAPSVPPHYLLPRGFPLPFSQSLLPQTRMFAPYPSQILNRGLPTNNPASTFPGYLSSHSNYQASPGTSSRPLPSGETELGSCEEDGRDDDVVEVTGE</sequence>
<name>ARIP4_XENTR</name>
<accession>A4IHD2</accession>
<evidence type="ECO:0000250" key="1"/>
<evidence type="ECO:0000255" key="2">
    <source>
        <dbReference type="PROSITE-ProRule" id="PRU00541"/>
    </source>
</evidence>
<evidence type="ECO:0000255" key="3">
    <source>
        <dbReference type="PROSITE-ProRule" id="PRU00542"/>
    </source>
</evidence>
<evidence type="ECO:0000256" key="4">
    <source>
        <dbReference type="SAM" id="MobiDB-lite"/>
    </source>
</evidence>
<evidence type="ECO:0000305" key="5"/>
<feature type="chain" id="PRO_0000315783" description="Helicase ARIP4">
    <location>
        <begin position="1"/>
        <end position="1396"/>
    </location>
</feature>
<feature type="domain" description="Helicase ATP-binding" evidence="2">
    <location>
        <begin position="290"/>
        <end position="510"/>
    </location>
</feature>
<feature type="domain" description="Helicase C-terminal" evidence="3">
    <location>
        <begin position="717"/>
        <end position="891"/>
    </location>
</feature>
<feature type="region of interest" description="Disordered" evidence="4">
    <location>
        <begin position="1"/>
        <end position="103"/>
    </location>
</feature>
<feature type="region of interest" description="Disordered" evidence="4">
    <location>
        <begin position="1117"/>
        <end position="1168"/>
    </location>
</feature>
<feature type="region of interest" description="Disordered" evidence="4">
    <location>
        <begin position="1194"/>
        <end position="1250"/>
    </location>
</feature>
<feature type="region of interest" description="Disordered" evidence="4">
    <location>
        <begin position="1340"/>
        <end position="1396"/>
    </location>
</feature>
<feature type="short sequence motif" description="DEAH box">
    <location>
        <begin position="461"/>
        <end position="464"/>
    </location>
</feature>
<feature type="short sequence motif" description="LXXLL motif 1">
    <location>
        <begin position="549"/>
        <end position="553"/>
    </location>
</feature>
<feature type="short sequence motif" description="LXXLL motif 2">
    <location>
        <begin position="1273"/>
        <end position="1277"/>
    </location>
</feature>
<feature type="compositionally biased region" description="Acidic residues" evidence="4">
    <location>
        <begin position="11"/>
        <end position="49"/>
    </location>
</feature>
<feature type="compositionally biased region" description="Polar residues" evidence="4">
    <location>
        <begin position="75"/>
        <end position="84"/>
    </location>
</feature>
<feature type="compositionally biased region" description="Polar residues" evidence="4">
    <location>
        <begin position="1128"/>
        <end position="1148"/>
    </location>
</feature>
<feature type="compositionally biased region" description="Polar residues" evidence="4">
    <location>
        <begin position="1218"/>
        <end position="1238"/>
    </location>
</feature>
<feature type="compositionally biased region" description="Polar residues" evidence="4">
    <location>
        <begin position="1355"/>
        <end position="1370"/>
    </location>
</feature>
<feature type="compositionally biased region" description="Acidic residues" evidence="4">
    <location>
        <begin position="1380"/>
        <end position="1396"/>
    </location>
</feature>
<feature type="binding site" evidence="2">
    <location>
        <begin position="303"/>
        <end position="310"/>
    </location>
    <ligand>
        <name>ATP</name>
        <dbReference type="ChEBI" id="CHEBI:30616"/>
    </ligand>
</feature>
<proteinExistence type="evidence at transcript level"/>
<keyword id="KW-0067">ATP-binding</keyword>
<keyword id="KW-0238">DNA-binding</keyword>
<keyword id="KW-0347">Helicase</keyword>
<keyword id="KW-0378">Hydrolase</keyword>
<keyword id="KW-0547">Nucleotide-binding</keyword>
<keyword id="KW-0539">Nucleus</keyword>
<keyword id="KW-1185">Reference proteome</keyword>
<keyword id="KW-0677">Repeat</keyword>